<evidence type="ECO:0000255" key="1">
    <source>
        <dbReference type="HAMAP-Rule" id="MF_01892"/>
    </source>
</evidence>
<keyword id="KW-0067">ATP-binding</keyword>
<keyword id="KW-0963">Cytoplasm</keyword>
<keyword id="KW-0436">Ligase</keyword>
<keyword id="KW-0547">Nucleotide-binding</keyword>
<keyword id="KW-1185">Reference proteome</keyword>
<keyword id="KW-0819">tRNA processing</keyword>
<sequence length="433" mass="47948">MDWVALDDTDSPAGGCTTHAAVLLRAELAEAGAEPVGRPLLVRLNPNVPFKTRGNAAVALPVEAPWSVDIEAVVLRALKKVVRKGYPETRPGLVVCEGEPPRVCESVYEEAVRRILNPGRVKESVDDDVNVVLEGRGIVGAVAALGFARVRKDHEVTFEGIAYRAEKYWGTERRVEESSIREFDRRTFPVTFDNLDSRDGDVLITPNTPCPVLYGVRSVEPDVLEVAPDMIKTREPVVEYEIFESNQATDAHLVRVDRLADAEDYSNPVLDLTVVEEPRRIPGGHVVVRCEDEEGVRVDIAAFRPARPLTEVVAALHPGDEIRVAGALRPETPKHPRTVNVEKLRVLRLERVEEVRNPVCGRCRRSMKSAGRKKGFKCSCGERAPEDSKIGVEVPRELVEGVTYEAPPVARRHLSKPEYLVELGLLEPSPLSR</sequence>
<name>TIAS_METKA</name>
<reference key="1">
    <citation type="journal article" date="2002" name="Proc. Natl. Acad. Sci. U.S.A.">
        <title>The complete genome of hyperthermophile Methanopyrus kandleri AV19 and monophyly of archaeal methanogens.</title>
        <authorList>
            <person name="Slesarev A.I."/>
            <person name="Mezhevaya K.V."/>
            <person name="Makarova K.S."/>
            <person name="Polushin N.N."/>
            <person name="Shcherbinina O.V."/>
            <person name="Shakhova V.V."/>
            <person name="Belova G.I."/>
            <person name="Aravind L."/>
            <person name="Natale D.A."/>
            <person name="Rogozin I.B."/>
            <person name="Tatusov R.L."/>
            <person name="Wolf Y.I."/>
            <person name="Stetter K.O."/>
            <person name="Malykh A.G."/>
            <person name="Koonin E.V."/>
            <person name="Kozyavkin S.A."/>
        </authorList>
    </citation>
    <scope>NUCLEOTIDE SEQUENCE [LARGE SCALE GENOMIC DNA]</scope>
    <source>
        <strain>AV19 / DSM 6324 / JCM 9639 / NBRC 100938</strain>
    </source>
</reference>
<organism>
    <name type="scientific">Methanopyrus kandleri (strain AV19 / DSM 6324 / JCM 9639 / NBRC 100938)</name>
    <dbReference type="NCBI Taxonomy" id="190192"/>
    <lineage>
        <taxon>Archaea</taxon>
        <taxon>Methanobacteriati</taxon>
        <taxon>Methanobacteriota</taxon>
        <taxon>Methanomada group</taxon>
        <taxon>Methanopyri</taxon>
        <taxon>Methanopyrales</taxon>
        <taxon>Methanopyraceae</taxon>
        <taxon>Methanopyrus</taxon>
    </lineage>
</organism>
<proteinExistence type="inferred from homology"/>
<accession>Q8TWM9</accession>
<protein>
    <recommendedName>
        <fullName evidence="1">tRNA(Ile2) 2-agmatinylcytidine synthetase TiaS</fullName>
        <shortName evidence="1">tRNA(Ile2)-agm2C synthetase</shortName>
        <ecNumber evidence="1">6.3.4.22</ecNumber>
    </recommendedName>
    <alternativeName>
        <fullName evidence="1">tRNA(Ile2) agmatidine synthetase</fullName>
    </alternativeName>
</protein>
<comment type="function">
    <text evidence="1">ATP-dependent agmatine transferase that catalyzes the formation of 2-agmatinylcytidine (agm2C) at the wobble position (C34) of tRNA(Ile2), converting the codon specificity from AUG to AUA.</text>
</comment>
<comment type="catalytic activity">
    <reaction evidence="1">
        <text>cytidine(34) in tRNA(Ile2) + agmatine + ATP + H2O = 2-agmatinylcytidine(34) in tRNA(Ile2) + AMP + 2 phosphate + 2 H(+)</text>
        <dbReference type="Rhea" id="RHEA:43608"/>
        <dbReference type="Rhea" id="RHEA-COMP:10625"/>
        <dbReference type="Rhea" id="RHEA-COMP:10626"/>
        <dbReference type="ChEBI" id="CHEBI:15377"/>
        <dbReference type="ChEBI" id="CHEBI:15378"/>
        <dbReference type="ChEBI" id="CHEBI:30616"/>
        <dbReference type="ChEBI" id="CHEBI:43474"/>
        <dbReference type="ChEBI" id="CHEBI:58145"/>
        <dbReference type="ChEBI" id="CHEBI:82748"/>
        <dbReference type="ChEBI" id="CHEBI:83545"/>
        <dbReference type="ChEBI" id="CHEBI:456215"/>
        <dbReference type="EC" id="6.3.4.22"/>
    </reaction>
</comment>
<comment type="subcellular location">
    <subcellularLocation>
        <location evidence="1">Cytoplasm</location>
    </subcellularLocation>
</comment>
<comment type="similarity">
    <text evidence="1">Belongs to the TiaS family.</text>
</comment>
<feature type="chain" id="PRO_0000407297" description="tRNA(Ile2) 2-agmatinylcytidine synthetase TiaS">
    <location>
        <begin position="1"/>
        <end position="433"/>
    </location>
</feature>
<dbReference type="EC" id="6.3.4.22" evidence="1"/>
<dbReference type="EMBL" id="AE009439">
    <property type="protein sequence ID" value="AAM02216.1"/>
    <property type="molecule type" value="Genomic_DNA"/>
</dbReference>
<dbReference type="RefSeq" id="WP_011019371.1">
    <property type="nucleotide sequence ID" value="NC_003551.1"/>
</dbReference>
<dbReference type="SMR" id="Q8TWM9"/>
<dbReference type="FunCoup" id="Q8TWM9">
    <property type="interactions" value="2"/>
</dbReference>
<dbReference type="STRING" id="190192.MK1003"/>
<dbReference type="PaxDb" id="190192-MK1003"/>
<dbReference type="EnsemblBacteria" id="AAM02216">
    <property type="protein sequence ID" value="AAM02216"/>
    <property type="gene ID" value="MK1003"/>
</dbReference>
<dbReference type="GeneID" id="1477104"/>
<dbReference type="KEGG" id="mka:MK1003"/>
<dbReference type="PATRIC" id="fig|190192.8.peg.1052"/>
<dbReference type="HOGENOM" id="CLU_675459_0_0_2"/>
<dbReference type="InParanoid" id="Q8TWM9"/>
<dbReference type="OrthoDB" id="39189at2157"/>
<dbReference type="Proteomes" id="UP000001826">
    <property type="component" value="Chromosome"/>
</dbReference>
<dbReference type="GO" id="GO:0005737">
    <property type="term" value="C:cytoplasm"/>
    <property type="evidence" value="ECO:0007669"/>
    <property type="project" value="UniProtKB-SubCell"/>
</dbReference>
<dbReference type="GO" id="GO:0005524">
    <property type="term" value="F:ATP binding"/>
    <property type="evidence" value="ECO:0007669"/>
    <property type="project" value="UniProtKB-KW"/>
</dbReference>
<dbReference type="GO" id="GO:0016879">
    <property type="term" value="F:ligase activity, forming carbon-nitrogen bonds"/>
    <property type="evidence" value="ECO:0007669"/>
    <property type="project" value="UniProtKB-UniRule"/>
</dbReference>
<dbReference type="GO" id="GO:0002101">
    <property type="term" value="P:tRNA wobble cytosine modification"/>
    <property type="evidence" value="ECO:0007669"/>
    <property type="project" value="UniProtKB-UniRule"/>
</dbReference>
<dbReference type="CDD" id="cd04482">
    <property type="entry name" value="RPA2_OBF_like"/>
    <property type="match status" value="1"/>
</dbReference>
<dbReference type="Gene3D" id="2.40.50.1010">
    <property type="match status" value="1"/>
</dbReference>
<dbReference type="Gene3D" id="3.30.70.2200">
    <property type="match status" value="1"/>
</dbReference>
<dbReference type="Gene3D" id="3.90.600.20">
    <property type="match status" value="1"/>
</dbReference>
<dbReference type="HAMAP" id="MF_01892">
    <property type="entry name" value="tRNA_Ile2_agm2C_synt"/>
    <property type="match status" value="1"/>
</dbReference>
<dbReference type="InterPro" id="IPR053870">
    <property type="entry name" value="TiaS-like_TCKD"/>
</dbReference>
<dbReference type="InterPro" id="IPR013696">
    <property type="entry name" value="TiaS_FLD"/>
</dbReference>
<dbReference type="InterPro" id="IPR024913">
    <property type="entry name" value="tRNA_Ile2__agm2C_synt"/>
</dbReference>
<dbReference type="InterPro" id="IPR055394">
    <property type="entry name" value="Zn_ribbon_TiaS"/>
</dbReference>
<dbReference type="PANTHER" id="PTHR40705:SF2">
    <property type="entry name" value="DUF1743 DOMAIN-CONTAINING PROTEIN"/>
    <property type="match status" value="1"/>
</dbReference>
<dbReference type="PANTHER" id="PTHR40705">
    <property type="entry name" value="TRNA(ILE2) 2-AGMATINYLCYTIDINE SYNTHETASE TIAS"/>
    <property type="match status" value="1"/>
</dbReference>
<dbReference type="Pfam" id="PF08489">
    <property type="entry name" value="TiaS_FLD"/>
    <property type="match status" value="1"/>
</dbReference>
<dbReference type="Pfam" id="PF22641">
    <property type="entry name" value="TiaS_TCKD"/>
    <property type="match status" value="1"/>
</dbReference>
<dbReference type="Pfam" id="PF23783">
    <property type="entry name" value="Zn_ribbon_TiaS"/>
    <property type="match status" value="1"/>
</dbReference>
<gene>
    <name evidence="1" type="primary">tiaS</name>
    <name type="ordered locus">MK1003</name>
</gene>